<accession>Q6BH05</accession>
<gene>
    <name type="primary">NUT1</name>
    <name type="synonym">MED5</name>
    <name type="ordered locus">DEHA2G22352g</name>
</gene>
<reference key="1">
    <citation type="journal article" date="2004" name="Nature">
        <title>Genome evolution in yeasts.</title>
        <authorList>
            <person name="Dujon B."/>
            <person name="Sherman D."/>
            <person name="Fischer G."/>
            <person name="Durrens P."/>
            <person name="Casaregola S."/>
            <person name="Lafontaine I."/>
            <person name="de Montigny J."/>
            <person name="Marck C."/>
            <person name="Neuveglise C."/>
            <person name="Talla E."/>
            <person name="Goffard N."/>
            <person name="Frangeul L."/>
            <person name="Aigle M."/>
            <person name="Anthouard V."/>
            <person name="Babour A."/>
            <person name="Barbe V."/>
            <person name="Barnay S."/>
            <person name="Blanchin S."/>
            <person name="Beckerich J.-M."/>
            <person name="Beyne E."/>
            <person name="Bleykasten C."/>
            <person name="Boisrame A."/>
            <person name="Boyer J."/>
            <person name="Cattolico L."/>
            <person name="Confanioleri F."/>
            <person name="de Daruvar A."/>
            <person name="Despons L."/>
            <person name="Fabre E."/>
            <person name="Fairhead C."/>
            <person name="Ferry-Dumazet H."/>
            <person name="Groppi A."/>
            <person name="Hantraye F."/>
            <person name="Hennequin C."/>
            <person name="Jauniaux N."/>
            <person name="Joyet P."/>
            <person name="Kachouri R."/>
            <person name="Kerrest A."/>
            <person name="Koszul R."/>
            <person name="Lemaire M."/>
            <person name="Lesur I."/>
            <person name="Ma L."/>
            <person name="Muller H."/>
            <person name="Nicaud J.-M."/>
            <person name="Nikolski M."/>
            <person name="Oztas S."/>
            <person name="Ozier-Kalogeropoulos O."/>
            <person name="Pellenz S."/>
            <person name="Potier S."/>
            <person name="Richard G.-F."/>
            <person name="Straub M.-L."/>
            <person name="Suleau A."/>
            <person name="Swennen D."/>
            <person name="Tekaia F."/>
            <person name="Wesolowski-Louvel M."/>
            <person name="Westhof E."/>
            <person name="Wirth B."/>
            <person name="Zeniou-Meyer M."/>
            <person name="Zivanovic Y."/>
            <person name="Bolotin-Fukuhara M."/>
            <person name="Thierry A."/>
            <person name="Bouchier C."/>
            <person name="Caudron B."/>
            <person name="Scarpelli C."/>
            <person name="Gaillardin C."/>
            <person name="Weissenbach J."/>
            <person name="Wincker P."/>
            <person name="Souciet J.-L."/>
        </authorList>
    </citation>
    <scope>NUCLEOTIDE SEQUENCE [LARGE SCALE GENOMIC DNA]</scope>
    <source>
        <strain>ATCC 36239 / CBS 767 / BCRC 21394 / JCM 1990 / NBRC 0083 / IGC 2968</strain>
    </source>
</reference>
<organism>
    <name type="scientific">Debaryomyces hansenii (strain ATCC 36239 / CBS 767 / BCRC 21394 / JCM 1990 / NBRC 0083 / IGC 2968)</name>
    <name type="common">Yeast</name>
    <name type="synonym">Torulaspora hansenii</name>
    <dbReference type="NCBI Taxonomy" id="284592"/>
    <lineage>
        <taxon>Eukaryota</taxon>
        <taxon>Fungi</taxon>
        <taxon>Dikarya</taxon>
        <taxon>Ascomycota</taxon>
        <taxon>Saccharomycotina</taxon>
        <taxon>Pichiomycetes</taxon>
        <taxon>Debaryomycetaceae</taxon>
        <taxon>Debaryomyces</taxon>
    </lineage>
</organism>
<evidence type="ECO:0000250" key="1"/>
<evidence type="ECO:0000305" key="2"/>
<proteinExistence type="inferred from homology"/>
<protein>
    <recommendedName>
        <fullName>Mediator of RNA polymerase II transcription subunit 5</fullName>
    </recommendedName>
    <alternativeName>
        <fullName>Mediator complex subunit 5</fullName>
    </alternativeName>
</protein>
<comment type="function">
    <text evidence="1">Component of the Mediator complex, a coactivator involved in the regulated transcription of nearly all RNA polymerase II-dependent genes. Mediator functions as a bridge to convey information from gene-specific regulatory proteins to the basal RNA polymerase II transcription machinery. Mediator is recruited to promoters by direct interactions with regulatory proteins and serves as a scaffold for the assembly of a functional preinitiation complex with RNA polymerase II and the general transcription factors (By similarity).</text>
</comment>
<comment type="subunit">
    <text evidence="1">Component of the Mediator complex.</text>
</comment>
<comment type="subcellular location">
    <subcellularLocation>
        <location evidence="1">Nucleus</location>
    </subcellularLocation>
</comment>
<comment type="similarity">
    <text evidence="2">Belongs to the Mediator complex subunit 5 family.</text>
</comment>
<keyword id="KW-0010">Activator</keyword>
<keyword id="KW-0539">Nucleus</keyword>
<keyword id="KW-1185">Reference proteome</keyword>
<keyword id="KW-0804">Transcription</keyword>
<keyword id="KW-0805">Transcription regulation</keyword>
<sequence length="990" mass="113960">MASSTATVSLHNLVKLCCKRNSTSKVFVSLYNQLEEKSPIQDNDYLSNLLQPDIKNKSKRESSLITEYILALAISSESQLEKFWKFLPEILLENQIHYMIELNSILLSKSNIERPSSDIFKEIVNNCFFKYTSSYISSLFPGISATQVSLLNHIIVVWCSVIRRSPFHLNTSSFKQLAVKIVSVLTECDLRNSLNYFISNTSSILNTDDLQVDSVQDSDDKKIAAIRSTTTIQLVNNISSINPKSRKATQLNVIKRYLWLNSIMKNWKFSNDVFLKQFEQNFLPNSSNNLKKPYVLAFELICAFFKGIVTSICSNESKYVLFNWKNFIITRLPTLLNDIKFTTSHVAPTSNDSSFKQETLDDAIINAFESFEDPVNKVLTQFSIDNLSICDLRQTFIKSCIYNKLIPVMSYHKIFTADNTVTDQFLNNGIEQVGQITSIRDEFETKLLNINTEFTTLEDSGLIEYINSLPGLLEFSATKQLELSETVDQVIEHLIDEKNIEKLYRLLLSVCNNLTTLNLICFNSNCGPFSILYKLINYIDNEDFNVDDDDNFQETYAFFGIIILAILLIIETFKIDYSQITVTNSYIVDYINEFYYRLCDSLTNISTSDTEEDNTIISNYNDLISDWINALFDDNNDGLSDDLIKSVNVKQIYKMIPIIYQQSIIATNSNKIDIKILNNGIDYLSQMFLIPCTLNIIKWLLRRIWADDPTLDCLPVQVLHELIKSNMGESDEPTSESKLFFQIVLKISGNSIISTLKKLNNWENSNLIKDIIEKVSNSVDPMYLENDLSIKLNERVNLYEQLKTNVINLVNNMNIYDYQFLNIFSSIDRDNELIRYIVEEITSYQKTNGGNEDTKLFINLSIFMILLDAIDNDDDKQYWIKRIKDTMVPVSSNSSGENRFDISMDYHYSSIFNNSDETSNNDYLFSGENNNSSVEIEGLKRKIGRHESLLNSFNKIKEFCDTEVQSTFVKSLRTFRDKLINELEVFTLNV</sequence>
<feature type="chain" id="PRO_0000302773" description="Mediator of RNA polymerase II transcription subunit 5">
    <location>
        <begin position="1"/>
        <end position="990"/>
    </location>
</feature>
<dbReference type="EMBL" id="CR382139">
    <property type="protein sequence ID" value="CAG91026.2"/>
    <property type="molecule type" value="Genomic_DNA"/>
</dbReference>
<dbReference type="RefSeq" id="XP_462516.2">
    <property type="nucleotide sequence ID" value="XM_462516.1"/>
</dbReference>
<dbReference type="SMR" id="Q6BH05"/>
<dbReference type="FunCoup" id="Q6BH05">
    <property type="interactions" value="225"/>
</dbReference>
<dbReference type="STRING" id="284592.Q6BH05"/>
<dbReference type="GeneID" id="2905468"/>
<dbReference type="KEGG" id="dha:DEHA2G22352g"/>
<dbReference type="VEuPathDB" id="FungiDB:DEHA2G22352g"/>
<dbReference type="eggNOG" id="ENOG502R1HB">
    <property type="taxonomic scope" value="Eukaryota"/>
</dbReference>
<dbReference type="HOGENOM" id="CLU_012200_0_0_1"/>
<dbReference type="InParanoid" id="Q6BH05"/>
<dbReference type="OMA" id="MVINICG"/>
<dbReference type="OrthoDB" id="5322661at2759"/>
<dbReference type="Proteomes" id="UP000000599">
    <property type="component" value="Chromosome G"/>
</dbReference>
<dbReference type="GO" id="GO:0016592">
    <property type="term" value="C:mediator complex"/>
    <property type="evidence" value="ECO:0007669"/>
    <property type="project" value="InterPro"/>
</dbReference>
<dbReference type="GO" id="GO:0003712">
    <property type="term" value="F:transcription coregulator activity"/>
    <property type="evidence" value="ECO:0007669"/>
    <property type="project" value="InterPro"/>
</dbReference>
<dbReference type="GO" id="GO:0006357">
    <property type="term" value="P:regulation of transcription by RNA polymerase II"/>
    <property type="evidence" value="ECO:0007669"/>
    <property type="project" value="InterPro"/>
</dbReference>
<dbReference type="InterPro" id="IPR014801">
    <property type="entry name" value="Mediator_Med5_fun"/>
</dbReference>
<dbReference type="PANTHER" id="PTHR35784">
    <property type="entry name" value="MEDIATOR OF RNA POLYMERASE II TRANSCRIPTION SUBUNIT 5"/>
    <property type="match status" value="1"/>
</dbReference>
<dbReference type="PANTHER" id="PTHR35784:SF1">
    <property type="entry name" value="MEDIATOR OF RNA POLYMERASE II TRANSCRIPTION SUBUNIT 5"/>
    <property type="match status" value="1"/>
</dbReference>
<dbReference type="Pfam" id="PF08689">
    <property type="entry name" value="Med5"/>
    <property type="match status" value="1"/>
</dbReference>
<name>MED5_DEBHA</name>